<protein>
    <recommendedName>
        <fullName>Iron(3+)-hydroxamate import system permease protein FhuB</fullName>
    </recommendedName>
    <alternativeName>
        <fullName>Ferric hydroxamate uptake protein B</fullName>
    </alternativeName>
    <alternativeName>
        <fullName>Ferrichrome transport system permease protein FhuB</fullName>
    </alternativeName>
    <alternativeName>
        <fullName>Iron(III)-hydroxamate import system permease protein FhuB</fullName>
    </alternativeName>
</protein>
<evidence type="ECO:0000250" key="1"/>
<evidence type="ECO:0000255" key="2"/>
<evidence type="ECO:0000269" key="3">
    <source>
    </source>
</evidence>
<evidence type="ECO:0000305" key="4"/>
<reference key="1">
    <citation type="submission" date="1995-11" db="EMBL/GenBank/DDBJ databases">
        <authorList>
            <person name="Schneider R."/>
            <person name="Hantke K."/>
        </authorList>
    </citation>
    <scope>NUCLEOTIDE SEQUENCE [GENOMIC DNA]</scope>
    <source>
        <strain>168</strain>
    </source>
</reference>
<reference key="2">
    <citation type="journal article" date="1998" name="Microbiology">
        <title>The yvsA-yvqA (293 degrees - 289 degrees) region of the Bacillus subtilis chromosome containing genes involved in metal ion uptake and a putative sigma factor.</title>
        <authorList>
            <person name="Wipat A."/>
            <person name="Brignell C.S."/>
            <person name="Guy J.B."/>
            <person name="Rose M."/>
            <person name="Emmerson P.T."/>
            <person name="Harwood C.R."/>
        </authorList>
    </citation>
    <scope>NUCLEOTIDE SEQUENCE [GENOMIC DNA]</scope>
    <source>
        <strain>168</strain>
    </source>
</reference>
<reference key="3">
    <citation type="journal article" date="1997" name="Nature">
        <title>The complete genome sequence of the Gram-positive bacterium Bacillus subtilis.</title>
        <authorList>
            <person name="Kunst F."/>
            <person name="Ogasawara N."/>
            <person name="Moszer I."/>
            <person name="Albertini A.M."/>
            <person name="Alloni G."/>
            <person name="Azevedo V."/>
            <person name="Bertero M.G."/>
            <person name="Bessieres P."/>
            <person name="Bolotin A."/>
            <person name="Borchert S."/>
            <person name="Borriss R."/>
            <person name="Boursier L."/>
            <person name="Brans A."/>
            <person name="Braun M."/>
            <person name="Brignell S.C."/>
            <person name="Bron S."/>
            <person name="Brouillet S."/>
            <person name="Bruschi C.V."/>
            <person name="Caldwell B."/>
            <person name="Capuano V."/>
            <person name="Carter N.M."/>
            <person name="Choi S.-K."/>
            <person name="Codani J.-J."/>
            <person name="Connerton I.F."/>
            <person name="Cummings N.J."/>
            <person name="Daniel R.A."/>
            <person name="Denizot F."/>
            <person name="Devine K.M."/>
            <person name="Duesterhoeft A."/>
            <person name="Ehrlich S.D."/>
            <person name="Emmerson P.T."/>
            <person name="Entian K.-D."/>
            <person name="Errington J."/>
            <person name="Fabret C."/>
            <person name="Ferrari E."/>
            <person name="Foulger D."/>
            <person name="Fritz C."/>
            <person name="Fujita M."/>
            <person name="Fujita Y."/>
            <person name="Fuma S."/>
            <person name="Galizzi A."/>
            <person name="Galleron N."/>
            <person name="Ghim S.-Y."/>
            <person name="Glaser P."/>
            <person name="Goffeau A."/>
            <person name="Golightly E.J."/>
            <person name="Grandi G."/>
            <person name="Guiseppi G."/>
            <person name="Guy B.J."/>
            <person name="Haga K."/>
            <person name="Haiech J."/>
            <person name="Harwood C.R."/>
            <person name="Henaut A."/>
            <person name="Hilbert H."/>
            <person name="Holsappel S."/>
            <person name="Hosono S."/>
            <person name="Hullo M.-F."/>
            <person name="Itaya M."/>
            <person name="Jones L.-M."/>
            <person name="Joris B."/>
            <person name="Karamata D."/>
            <person name="Kasahara Y."/>
            <person name="Klaerr-Blanchard M."/>
            <person name="Klein C."/>
            <person name="Kobayashi Y."/>
            <person name="Koetter P."/>
            <person name="Koningstein G."/>
            <person name="Krogh S."/>
            <person name="Kumano M."/>
            <person name="Kurita K."/>
            <person name="Lapidus A."/>
            <person name="Lardinois S."/>
            <person name="Lauber J."/>
            <person name="Lazarevic V."/>
            <person name="Lee S.-M."/>
            <person name="Levine A."/>
            <person name="Liu H."/>
            <person name="Masuda S."/>
            <person name="Mauel C."/>
            <person name="Medigue C."/>
            <person name="Medina N."/>
            <person name="Mellado R.P."/>
            <person name="Mizuno M."/>
            <person name="Moestl D."/>
            <person name="Nakai S."/>
            <person name="Noback M."/>
            <person name="Noone D."/>
            <person name="O'Reilly M."/>
            <person name="Ogawa K."/>
            <person name="Ogiwara A."/>
            <person name="Oudega B."/>
            <person name="Park S.-H."/>
            <person name="Parro V."/>
            <person name="Pohl T.M."/>
            <person name="Portetelle D."/>
            <person name="Porwollik S."/>
            <person name="Prescott A.M."/>
            <person name="Presecan E."/>
            <person name="Pujic P."/>
            <person name="Purnelle B."/>
            <person name="Rapoport G."/>
            <person name="Rey M."/>
            <person name="Reynolds S."/>
            <person name="Rieger M."/>
            <person name="Rivolta C."/>
            <person name="Rocha E."/>
            <person name="Roche B."/>
            <person name="Rose M."/>
            <person name="Sadaie Y."/>
            <person name="Sato T."/>
            <person name="Scanlan E."/>
            <person name="Schleich S."/>
            <person name="Schroeter R."/>
            <person name="Scoffone F."/>
            <person name="Sekiguchi J."/>
            <person name="Sekowska A."/>
            <person name="Seror S.J."/>
            <person name="Serror P."/>
            <person name="Shin B.-S."/>
            <person name="Soldo B."/>
            <person name="Sorokin A."/>
            <person name="Tacconi E."/>
            <person name="Takagi T."/>
            <person name="Takahashi H."/>
            <person name="Takemaru K."/>
            <person name="Takeuchi M."/>
            <person name="Tamakoshi A."/>
            <person name="Tanaka T."/>
            <person name="Terpstra P."/>
            <person name="Tognoni A."/>
            <person name="Tosato V."/>
            <person name="Uchiyama S."/>
            <person name="Vandenbol M."/>
            <person name="Vannier F."/>
            <person name="Vassarotti A."/>
            <person name="Viari A."/>
            <person name="Wambutt R."/>
            <person name="Wedler E."/>
            <person name="Wedler H."/>
            <person name="Weitzenegger T."/>
            <person name="Winters P."/>
            <person name="Wipat A."/>
            <person name="Yamamoto H."/>
            <person name="Yamane K."/>
            <person name="Yasumoto K."/>
            <person name="Yata K."/>
            <person name="Yoshida K."/>
            <person name="Yoshikawa H.-F."/>
            <person name="Zumstein E."/>
            <person name="Yoshikawa H."/>
            <person name="Danchin A."/>
        </authorList>
    </citation>
    <scope>NUCLEOTIDE SEQUENCE [LARGE SCALE GENOMIC DNA]</scope>
    <source>
        <strain>168</strain>
    </source>
</reference>
<reference key="4">
    <citation type="journal article" date="1993" name="Mol. Microbiol.">
        <title>Iron-hydroxamate uptake systems in Bacillus subtilis: identification of a lipoprotein as part of a binding protein-dependent transport system.</title>
        <authorList>
            <person name="Schneider R."/>
            <person name="Hantke K."/>
        </authorList>
    </citation>
    <scope>NUCLEOTIDE SEQUENCE [GENOMIC DNA] OF 1-38</scope>
    <source>
        <strain>168 / Marburg / ATCC 6051 / DSM 10 / JCM 1465 / NBRC 13719 / NCIMB 3610 / NRRL NRS-744 / VKM B-501</strain>
    </source>
</reference>
<reference key="5">
    <citation type="journal article" date="2010" name="Genes Dev.">
        <title>Functional microdomains in bacterial membranes.</title>
        <authorList>
            <person name="Lopez D."/>
            <person name="Kolter R."/>
        </authorList>
    </citation>
    <scope>SUBCELLULAR LOCATION</scope>
    <source>
        <strain>168 / Marburg / ATCC 6051 / DSM 10 / JCM 1465 / NBRC 13719 / NCIMB 3610 / NRRL NRS-744 / VKM B-501</strain>
    </source>
</reference>
<gene>
    <name type="primary">fhuB</name>
    <name type="ordered locus">BSU33310</name>
</gene>
<dbReference type="EMBL" id="X93092">
    <property type="protein sequence ID" value="CAA63643.1"/>
    <property type="molecule type" value="Genomic_DNA"/>
</dbReference>
<dbReference type="EMBL" id="AJ223978">
    <property type="protein sequence ID" value="CAA11720.1"/>
    <property type="molecule type" value="Genomic_DNA"/>
</dbReference>
<dbReference type="EMBL" id="AL009126">
    <property type="protein sequence ID" value="CAB15337.1"/>
    <property type="molecule type" value="Genomic_DNA"/>
</dbReference>
<dbReference type="EMBL" id="M87283">
    <property type="status" value="NOT_ANNOTATED_CDS"/>
    <property type="molecule type" value="Genomic_DNA"/>
</dbReference>
<dbReference type="PIR" id="A69622">
    <property type="entry name" value="A69622"/>
</dbReference>
<dbReference type="RefSeq" id="NP_391212.1">
    <property type="nucleotide sequence ID" value="NC_000964.3"/>
</dbReference>
<dbReference type="RefSeq" id="WP_010886613.1">
    <property type="nucleotide sequence ID" value="NC_000964.3"/>
</dbReference>
<dbReference type="SMR" id="P49936"/>
<dbReference type="FunCoup" id="P49936">
    <property type="interactions" value="105"/>
</dbReference>
<dbReference type="STRING" id="224308.BSU33310"/>
<dbReference type="PaxDb" id="224308-BSU33310"/>
<dbReference type="EnsemblBacteria" id="CAB15337">
    <property type="protein sequence ID" value="CAB15337"/>
    <property type="gene ID" value="BSU_33310"/>
</dbReference>
<dbReference type="GeneID" id="937085"/>
<dbReference type="KEGG" id="bsu:BSU33310"/>
<dbReference type="PATRIC" id="fig|224308.43.peg.3493"/>
<dbReference type="eggNOG" id="COG0609">
    <property type="taxonomic scope" value="Bacteria"/>
</dbReference>
<dbReference type="InParanoid" id="P49936"/>
<dbReference type="OrthoDB" id="9811721at2"/>
<dbReference type="PhylomeDB" id="P49936"/>
<dbReference type="BioCyc" id="BSUB:BSU33310-MONOMER"/>
<dbReference type="Proteomes" id="UP000001570">
    <property type="component" value="Chromosome"/>
</dbReference>
<dbReference type="GO" id="GO:0045121">
    <property type="term" value="C:membrane raft"/>
    <property type="evidence" value="ECO:0007669"/>
    <property type="project" value="UniProtKB-SubCell"/>
</dbReference>
<dbReference type="GO" id="GO:0005886">
    <property type="term" value="C:plasma membrane"/>
    <property type="evidence" value="ECO:0000318"/>
    <property type="project" value="GO_Central"/>
</dbReference>
<dbReference type="GO" id="GO:0022857">
    <property type="term" value="F:transmembrane transporter activity"/>
    <property type="evidence" value="ECO:0000318"/>
    <property type="project" value="GO_Central"/>
</dbReference>
<dbReference type="GO" id="GO:0033214">
    <property type="term" value="P:siderophore-dependent iron import into cell"/>
    <property type="evidence" value="ECO:0000318"/>
    <property type="project" value="GO_Central"/>
</dbReference>
<dbReference type="CDD" id="cd06550">
    <property type="entry name" value="TM_ABC_iron-siderophores_like"/>
    <property type="match status" value="1"/>
</dbReference>
<dbReference type="FunFam" id="1.10.3470.10:FF:000001">
    <property type="entry name" value="Vitamin B12 ABC transporter permease BtuC"/>
    <property type="match status" value="1"/>
</dbReference>
<dbReference type="Gene3D" id="1.10.3470.10">
    <property type="entry name" value="ABC transporter involved in vitamin B12 uptake, BtuC"/>
    <property type="match status" value="1"/>
</dbReference>
<dbReference type="InterPro" id="IPR037294">
    <property type="entry name" value="ABC_BtuC-like"/>
</dbReference>
<dbReference type="InterPro" id="IPR000522">
    <property type="entry name" value="ABC_transptr_permease_BtuC"/>
</dbReference>
<dbReference type="PANTHER" id="PTHR30472">
    <property type="entry name" value="FERRIC ENTEROBACTIN TRANSPORT SYSTEM PERMEASE PROTEIN"/>
    <property type="match status" value="1"/>
</dbReference>
<dbReference type="PANTHER" id="PTHR30472:SF58">
    <property type="entry name" value="IRON(3+)-HYDROXAMATE IMPORT SYSTEM PERMEASE PROTEIN FHUB"/>
    <property type="match status" value="1"/>
</dbReference>
<dbReference type="Pfam" id="PF01032">
    <property type="entry name" value="FecCD"/>
    <property type="match status" value="1"/>
</dbReference>
<dbReference type="SUPFAM" id="SSF81345">
    <property type="entry name" value="ABC transporter involved in vitamin B12 uptake, BtuC"/>
    <property type="match status" value="1"/>
</dbReference>
<accession>P49936</accession>
<comment type="function">
    <text evidence="1">Part of the ABC transporter complex FhuBGCD involved in iron(3+)-hydroxamate import. Responsible for the translocation of the substrate across the membrane (By similarity).</text>
</comment>
<comment type="subunit">
    <text evidence="1">The complex is composed of an ATP-binding protein (FhuC), two transmembrane proteins (FhuB and FhuG) and a solute-binding protein (FhuD or YxeB).</text>
</comment>
<comment type="subcellular location">
    <subcellularLocation>
        <location evidence="3">Cell membrane</location>
        <topology evidence="4">Multi-pass membrane protein</topology>
    </subcellularLocation>
    <subcellularLocation>
        <location evidence="3">Membrane raft</location>
        <topology evidence="2">Multi-pass membrane protein</topology>
    </subcellularLocation>
    <text evidence="3">Present in detergent-resistant membrane (DRM) fractions that may be equivalent to eukaryotic membrane rafts; these rafts include proteins involved in signaling, molecule trafficking and protein secretion.</text>
</comment>
<comment type="similarity">
    <text evidence="4">Belongs to the binding-protein-dependent transport system permease family. FecCD subfamily.</text>
</comment>
<sequence>MHFHFCSKHSIKSAEKSDILKQQLIIIISNRKEVRQLSQHKNIRTASEEIQWTSRTYGAVIVLIAGLCLLCLGAFLSISLGAADIHLRTVWEAIFHYQPTKTSHQIIHDLRLPRTAAAALVGALLAVSGAIMQGMTRNPLAEPSIMGVTSGSAFAVSIAFAFFPGLSAMGLVLWSFAGAGLGASTVMGIGMFSRGGLTPVKLALAGTAVTYFFTGISTAIAIRFDVAQDISFWYAGGVAGVKWSGVQLLLIAGAVGLTLAFFIARSVTVLSLGDDLAKGLGQYTSAVKLVGMLIVVILTGAAVSIAGTIAFIGLIIPHITRFLVGVDYRWIIPCSAVLGAVLLVFADIAARLVNAPFETPVGALTSLIGVPFFFYLARRERRGL</sequence>
<keyword id="KW-1003">Cell membrane</keyword>
<keyword id="KW-0406">Ion transport</keyword>
<keyword id="KW-0408">Iron</keyword>
<keyword id="KW-0410">Iron transport</keyword>
<keyword id="KW-0472">Membrane</keyword>
<keyword id="KW-1185">Reference proteome</keyword>
<keyword id="KW-0812">Transmembrane</keyword>
<keyword id="KW-1133">Transmembrane helix</keyword>
<keyword id="KW-0813">Transport</keyword>
<feature type="chain" id="PRO_0000060026" description="Iron(3+)-hydroxamate import system permease protein FhuB">
    <location>
        <begin position="1"/>
        <end position="384"/>
    </location>
</feature>
<feature type="transmembrane region" description="Helical" evidence="2">
    <location>
        <begin position="58"/>
        <end position="78"/>
    </location>
</feature>
<feature type="transmembrane region" description="Helical" evidence="2">
    <location>
        <begin position="115"/>
        <end position="135"/>
    </location>
</feature>
<feature type="transmembrane region" description="Helical" evidence="2">
    <location>
        <begin position="154"/>
        <end position="174"/>
    </location>
</feature>
<feature type="transmembrane region" description="Helical" evidence="2">
    <location>
        <begin position="176"/>
        <end position="196"/>
    </location>
</feature>
<feature type="transmembrane region" description="Helical" evidence="2">
    <location>
        <begin position="202"/>
        <end position="222"/>
    </location>
</feature>
<feature type="transmembrane region" description="Helical" evidence="2">
    <location>
        <begin position="243"/>
        <end position="263"/>
    </location>
</feature>
<feature type="transmembrane region" description="Helical" evidence="2">
    <location>
        <begin position="296"/>
        <end position="316"/>
    </location>
</feature>
<feature type="transmembrane region" description="Helical" evidence="2">
    <location>
        <begin position="330"/>
        <end position="350"/>
    </location>
</feature>
<feature type="transmembrane region" description="Helical" evidence="2">
    <location>
        <begin position="357"/>
        <end position="377"/>
    </location>
</feature>
<organism>
    <name type="scientific">Bacillus subtilis (strain 168)</name>
    <dbReference type="NCBI Taxonomy" id="224308"/>
    <lineage>
        <taxon>Bacteria</taxon>
        <taxon>Bacillati</taxon>
        <taxon>Bacillota</taxon>
        <taxon>Bacilli</taxon>
        <taxon>Bacillales</taxon>
        <taxon>Bacillaceae</taxon>
        <taxon>Bacillus</taxon>
    </lineage>
</organism>
<name>FHUB_BACSU</name>
<proteinExistence type="inferred from homology"/>